<feature type="initiator methionine" description="Removed" evidence="3">
    <location>
        <position position="1"/>
    </location>
</feature>
<feature type="chain" id="PRO_0000058149" description="Platelet-activating factor acetylhydrolase IB subunit alpha2">
    <location>
        <begin position="2"/>
        <end position="229"/>
    </location>
</feature>
<feature type="active site" evidence="1">
    <location>
        <position position="48"/>
    </location>
</feature>
<feature type="active site" evidence="1">
    <location>
        <position position="193"/>
    </location>
</feature>
<feature type="active site" evidence="1">
    <location>
        <position position="196"/>
    </location>
</feature>
<feature type="modified residue" description="N-acetylserine" evidence="3">
    <location>
        <position position="2"/>
    </location>
</feature>
<feature type="modified residue" description="Phosphoserine" evidence="3">
    <location>
        <position position="2"/>
    </location>
</feature>
<feature type="modified residue" description="Phosphoserine" evidence="3">
    <location>
        <position position="64"/>
    </location>
</feature>
<feature type="modified residue" description="Phosphothreonine" evidence="6">
    <location>
        <position position="220"/>
    </location>
</feature>
<feature type="helix" evidence="11">
    <location>
        <begin position="8"/>
        <end position="10"/>
    </location>
</feature>
<feature type="strand" evidence="11">
    <location>
        <begin position="18"/>
        <end position="21"/>
    </location>
</feature>
<feature type="helix" evidence="11">
    <location>
        <begin position="23"/>
        <end position="37"/>
    </location>
</feature>
<feature type="strand" evidence="11">
    <location>
        <begin position="41"/>
        <end position="47"/>
    </location>
</feature>
<feature type="helix" evidence="11">
    <location>
        <begin position="48"/>
        <end position="51"/>
    </location>
</feature>
<feature type="helix" evidence="11">
    <location>
        <begin position="52"/>
        <end position="55"/>
    </location>
</feature>
<feature type="helix" evidence="11">
    <location>
        <begin position="57"/>
        <end position="62"/>
    </location>
</feature>
<feature type="helix" evidence="11">
    <location>
        <begin position="64"/>
        <end position="66"/>
    </location>
</feature>
<feature type="strand" evidence="11">
    <location>
        <begin position="68"/>
        <end position="72"/>
    </location>
</feature>
<feature type="helix" evidence="11">
    <location>
        <begin position="78"/>
        <end position="86"/>
    </location>
</feature>
<feature type="turn" evidence="11">
    <location>
        <begin position="87"/>
        <end position="90"/>
    </location>
</feature>
<feature type="strand" evidence="11">
    <location>
        <begin position="96"/>
        <end position="101"/>
    </location>
</feature>
<feature type="helix" evidence="11">
    <location>
        <begin position="111"/>
        <end position="128"/>
    </location>
</feature>
<feature type="strand" evidence="11">
    <location>
        <begin position="133"/>
        <end position="137"/>
    </location>
</feature>
<feature type="strand" evidence="11">
    <location>
        <begin position="143"/>
        <end position="145"/>
    </location>
</feature>
<feature type="helix" evidence="11">
    <location>
        <begin position="148"/>
        <end position="163"/>
    </location>
</feature>
<feature type="strand" evidence="11">
    <location>
        <begin position="164"/>
        <end position="173"/>
    </location>
</feature>
<feature type="turn" evidence="11">
    <location>
        <begin position="188"/>
        <end position="190"/>
    </location>
</feature>
<feature type="strand" evidence="11">
    <location>
        <begin position="194"/>
        <end position="197"/>
    </location>
</feature>
<feature type="helix" evidence="11">
    <location>
        <begin position="199"/>
        <end position="216"/>
    </location>
</feature>
<organism>
    <name type="scientific">Bos taurus</name>
    <name type="common">Bovine</name>
    <dbReference type="NCBI Taxonomy" id="9913"/>
    <lineage>
        <taxon>Eukaryota</taxon>
        <taxon>Metazoa</taxon>
        <taxon>Chordata</taxon>
        <taxon>Craniata</taxon>
        <taxon>Vertebrata</taxon>
        <taxon>Euteleostomi</taxon>
        <taxon>Mammalia</taxon>
        <taxon>Eutheria</taxon>
        <taxon>Laurasiatheria</taxon>
        <taxon>Artiodactyla</taxon>
        <taxon>Ruminantia</taxon>
        <taxon>Pecora</taxon>
        <taxon>Bovidae</taxon>
        <taxon>Bovinae</taxon>
        <taxon>Bos</taxon>
    </lineage>
</organism>
<proteinExistence type="evidence at protein level"/>
<reference key="1">
    <citation type="journal article" date="1995" name="J. Biol. Chem.">
        <title>Cloning and expression of a cDNA encoding the beta-subunit (30-kDa subunit) of bovine brain platelet-activating factor acetylhydrolase.</title>
        <authorList>
            <person name="Hattori M."/>
            <person name="Adachi H."/>
            <person name="Aoki J."/>
            <person name="Tsujimoto M."/>
            <person name="Arai H."/>
            <person name="Inoue K."/>
        </authorList>
    </citation>
    <scope>NUCLEOTIDE SEQUENCE [MRNA]</scope>
    <scope>PROTEIN SEQUENCE OF 37-53; 134-152 AND 167-196</scope>
    <source>
        <tissue>Brain</tissue>
    </source>
</reference>
<reference key="2">
    <citation type="submission" date="2005-08" db="EMBL/GenBank/DDBJ databases">
        <authorList>
            <consortium name="NIH - Mammalian Gene Collection (MGC) project"/>
        </authorList>
    </citation>
    <scope>NUCLEOTIDE SEQUENCE [LARGE SCALE MRNA]</scope>
    <source>
        <strain>Hereford</strain>
        <tissue>Hypothalamus</tissue>
    </source>
</reference>
<reference key="3">
    <citation type="journal article" date="1999" name="J. Biol. Chem.">
        <title>Biochemical characterization of various catalytic complexes of the brain platelet-activating factor acetylhydrolase.</title>
        <authorList>
            <person name="Manya H."/>
            <person name="Aoki J."/>
            <person name="Kato H."/>
            <person name="Ishii J."/>
            <person name="Hino S."/>
            <person name="Arai H."/>
            <person name="Inoue K."/>
        </authorList>
    </citation>
    <scope>SUBUNIT</scope>
    <scope>CATALYTIC ACTIVITY</scope>
    <scope>FUNCTION</scope>
    <scope>ACTIVITY REGULATION</scope>
    <scope>INTERACTION WITH PAFAH1B1</scope>
</reference>
<reference key="4">
    <citation type="journal article" date="2001" name="Protein Eng.">
        <title>Preparation and crystal structure of the recombinant alpha(1)/alpha(2) catalytic heterodimer of bovine brain platelet-activating factor acetylhydrolase Ib.</title>
        <authorList>
            <person name="Sheffield P.J."/>
            <person name="McMullen T.W."/>
            <person name="Li J."/>
            <person name="Ho Y.S."/>
            <person name="Garrard S.M."/>
            <person name="Derewenda U."/>
            <person name="Derewenda Z.S."/>
        </authorList>
    </citation>
    <scope>X-RAY CRYSTALLOGRAPHY (2.1 ANGSTROMS)</scope>
    <source>
        <tissue>Brain</tissue>
    </source>
</reference>
<evidence type="ECO:0000250" key="1"/>
<evidence type="ECO:0000250" key="2">
    <source>
        <dbReference type="UniProtKB" id="P43034"/>
    </source>
</evidence>
<evidence type="ECO:0000250" key="3">
    <source>
        <dbReference type="UniProtKB" id="P68402"/>
    </source>
</evidence>
<evidence type="ECO:0000250" key="4">
    <source>
        <dbReference type="UniProtKB" id="Q15102"/>
    </source>
</evidence>
<evidence type="ECO:0000250" key="5">
    <source>
        <dbReference type="UniProtKB" id="Q29460"/>
    </source>
</evidence>
<evidence type="ECO:0000250" key="6">
    <source>
        <dbReference type="UniProtKB" id="Q61206"/>
    </source>
</evidence>
<evidence type="ECO:0000269" key="7">
    <source>
    </source>
</evidence>
<evidence type="ECO:0000303" key="8">
    <source>
    </source>
</evidence>
<evidence type="ECO:0000305" key="9"/>
<evidence type="ECO:0000305" key="10">
    <source>
    </source>
</evidence>
<evidence type="ECO:0007829" key="11">
    <source>
        <dbReference type="PDB" id="1FXW"/>
    </source>
</evidence>
<dbReference type="EC" id="3.1.1.47" evidence="7"/>
<dbReference type="EMBL" id="D49678">
    <property type="protein sequence ID" value="BAA08534.1"/>
    <property type="molecule type" value="mRNA"/>
</dbReference>
<dbReference type="EMBL" id="BC103452">
    <property type="protein sequence ID" value="AAI03453.1"/>
    <property type="molecule type" value="mRNA"/>
</dbReference>
<dbReference type="RefSeq" id="NP_777089.1">
    <property type="nucleotide sequence ID" value="NM_174664.2"/>
</dbReference>
<dbReference type="PDB" id="1FXW">
    <property type="method" value="X-ray"/>
    <property type="resolution" value="2.10 A"/>
    <property type="chains" value="F=1-229"/>
</dbReference>
<dbReference type="PDBsum" id="1FXW"/>
<dbReference type="SMR" id="P68401"/>
<dbReference type="FunCoup" id="P68401">
    <property type="interactions" value="3664"/>
</dbReference>
<dbReference type="IntAct" id="P68401">
    <property type="interactions" value="1"/>
</dbReference>
<dbReference type="MINT" id="P68401"/>
<dbReference type="STRING" id="9913.ENSBTAP00000007398"/>
<dbReference type="SwissLipids" id="SLP:000000692"/>
<dbReference type="PaxDb" id="9913-ENSBTAP00000007398"/>
<dbReference type="PeptideAtlas" id="P68401"/>
<dbReference type="Ensembl" id="ENSBTAT00000007398.4">
    <property type="protein sequence ID" value="ENSBTAP00000007398.3"/>
    <property type="gene ID" value="ENSBTAG00000005627.4"/>
</dbReference>
<dbReference type="GeneID" id="282514"/>
<dbReference type="KEGG" id="bta:282514"/>
<dbReference type="CTD" id="5049"/>
<dbReference type="VEuPathDB" id="HostDB:ENSBTAG00000005627"/>
<dbReference type="VGNC" id="VGNC:32550">
    <property type="gene designation" value="PAFAH1B2"/>
</dbReference>
<dbReference type="eggNOG" id="KOG1388">
    <property type="taxonomic scope" value="Eukaryota"/>
</dbReference>
<dbReference type="GeneTree" id="ENSGT00950000183199"/>
<dbReference type="HOGENOM" id="CLU_051989_2_0_1"/>
<dbReference type="InParanoid" id="P68401"/>
<dbReference type="OMA" id="AWNQYFA"/>
<dbReference type="OrthoDB" id="505607at2759"/>
<dbReference type="TreeFam" id="TF323955"/>
<dbReference type="BRENDA" id="3.1.1.47">
    <property type="organism ID" value="908"/>
</dbReference>
<dbReference type="Reactome" id="R-BTA-6798695">
    <property type="pathway name" value="Neutrophil degranulation"/>
</dbReference>
<dbReference type="Reactome" id="R-BTA-6811436">
    <property type="pathway name" value="COPI-independent Golgi-to-ER retrograde traffic"/>
</dbReference>
<dbReference type="EvolutionaryTrace" id="P68401"/>
<dbReference type="Proteomes" id="UP000009136">
    <property type="component" value="Chromosome 15"/>
</dbReference>
<dbReference type="Bgee" id="ENSBTAG00000005627">
    <property type="expression patterns" value="Expressed in occipital lobe and 107 other cell types or tissues"/>
</dbReference>
<dbReference type="GO" id="GO:0008247">
    <property type="term" value="C:1-alkyl-2-acetylglycerophosphocholine esterase complex"/>
    <property type="evidence" value="ECO:0000314"/>
    <property type="project" value="UniProtKB"/>
</dbReference>
<dbReference type="GO" id="GO:0005737">
    <property type="term" value="C:cytoplasm"/>
    <property type="evidence" value="ECO:0000318"/>
    <property type="project" value="GO_Central"/>
</dbReference>
<dbReference type="GO" id="GO:0005829">
    <property type="term" value="C:cytosol"/>
    <property type="evidence" value="ECO:0007669"/>
    <property type="project" value="Ensembl"/>
</dbReference>
<dbReference type="GO" id="GO:0001650">
    <property type="term" value="C:fibrillar center"/>
    <property type="evidence" value="ECO:0007669"/>
    <property type="project" value="Ensembl"/>
</dbReference>
<dbReference type="GO" id="GO:0005886">
    <property type="term" value="C:plasma membrane"/>
    <property type="evidence" value="ECO:0007669"/>
    <property type="project" value="Ensembl"/>
</dbReference>
<dbReference type="GO" id="GO:0003847">
    <property type="term" value="F:1-alkyl-2-acetylglycerophosphocholine esterase activity"/>
    <property type="evidence" value="ECO:0000314"/>
    <property type="project" value="UniProtKB"/>
</dbReference>
<dbReference type="GO" id="GO:0047179">
    <property type="term" value="F:platelet-activating factor acetyltransferase activity"/>
    <property type="evidence" value="ECO:0000318"/>
    <property type="project" value="GO_Central"/>
</dbReference>
<dbReference type="GO" id="GO:0046982">
    <property type="term" value="F:protein heterodimerization activity"/>
    <property type="evidence" value="ECO:0000314"/>
    <property type="project" value="UniProtKB"/>
</dbReference>
<dbReference type="GO" id="GO:0042803">
    <property type="term" value="F:protein homodimerization activity"/>
    <property type="evidence" value="ECO:0000314"/>
    <property type="project" value="UniProtKB"/>
</dbReference>
<dbReference type="GO" id="GO:0016042">
    <property type="term" value="P:lipid catabolic process"/>
    <property type="evidence" value="ECO:0007669"/>
    <property type="project" value="UniProtKB-KW"/>
</dbReference>
<dbReference type="GO" id="GO:0016239">
    <property type="term" value="P:positive regulation of macroautophagy"/>
    <property type="evidence" value="ECO:0007669"/>
    <property type="project" value="Ensembl"/>
</dbReference>
<dbReference type="GO" id="GO:0007283">
    <property type="term" value="P:spermatogenesis"/>
    <property type="evidence" value="ECO:0000250"/>
    <property type="project" value="UniProtKB"/>
</dbReference>
<dbReference type="CDD" id="cd01820">
    <property type="entry name" value="PAF_acetylesterase_like"/>
    <property type="match status" value="1"/>
</dbReference>
<dbReference type="FunFam" id="3.40.50.1110:FF:000004">
    <property type="entry name" value="Platelet-activating factor acetylhydrolase IB subunit beta"/>
    <property type="match status" value="1"/>
</dbReference>
<dbReference type="Gene3D" id="3.40.50.1110">
    <property type="entry name" value="SGNH hydrolase"/>
    <property type="match status" value="1"/>
</dbReference>
<dbReference type="InterPro" id="IPR013830">
    <property type="entry name" value="SGNH_hydro"/>
</dbReference>
<dbReference type="InterPro" id="IPR036514">
    <property type="entry name" value="SGNH_hydro_sf"/>
</dbReference>
<dbReference type="PANTHER" id="PTHR11852">
    <property type="entry name" value="PLATELET-ACTIVATING FACTOR ACETYLHYDROLASE"/>
    <property type="match status" value="1"/>
</dbReference>
<dbReference type="PANTHER" id="PTHR11852:SF1">
    <property type="entry name" value="PLATELET-ACTIVATING FACTOR ACETYLHYDROLASE IB SUBUNIT ALPHA2"/>
    <property type="match status" value="1"/>
</dbReference>
<dbReference type="Pfam" id="PF13472">
    <property type="entry name" value="Lipase_GDSL_2"/>
    <property type="match status" value="1"/>
</dbReference>
<dbReference type="SUPFAM" id="SSF52266">
    <property type="entry name" value="SGNH hydrolase"/>
    <property type="match status" value="1"/>
</dbReference>
<name>PA1B2_BOVIN</name>
<accession>P68401</accession>
<accession>O00687</accession>
<accession>Q29459</accession>
<accession>Q3ZBB8</accession>
<sequence length="229" mass="25569">MSQGDSNPAAIPHAAEDIQGDDRWMSQHNRFVLDCKDKEPDVLFVGDSMVQLMQQYEIWRELFSPLHALNFGIGGDTTRHVLWRLKNGELENIKPKVIVVWVGTNNHENTAEEVAGGIEAIVQLINTRQPQAKIIVLGLLPRGEKPNPLRQKNAKVNQLLKVSLPKLANVQLLDTDGGFVHSDGAISCHDMFDFLHLTGGGYAKICKPLHELIMQLLEETPEEKQTTIA</sequence>
<protein>
    <recommendedName>
        <fullName evidence="9">Platelet-activating factor acetylhydrolase IB subunit alpha2</fullName>
        <ecNumber evidence="7">3.1.1.47</ecNumber>
    </recommendedName>
    <alternativeName>
        <fullName>PAF acetylhydrolase 30 kDa subunit</fullName>
        <shortName>PAF-AH 30 kDa subunit</shortName>
    </alternativeName>
    <alternativeName>
        <fullName>PAF-AH subunit beta</fullName>
        <shortName>PAFAH subunit beta</shortName>
    </alternativeName>
</protein>
<gene>
    <name type="primary">PAFAH1B2P68402</name>
    <name type="synonym">PAFAHB</name>
</gene>
<comment type="function">
    <text evidence="6 7">Alpha2 catalytic subunit of the cytosolic type I platelet-activating factor (PAF) acetylhydrolase (PAF-AH (I)) heterotetrameric enzyme that catalyzes the hydrolyze of the acetyl group at the sn-2 position of PAF and its analogs and modulates the action of PAF (PubMed:10542206). The activity and substrate specificity of PAF-AH (I) are affected by its subunit composition (PubMed:10542206). The alpha2/alpha2 homodimer (PAFAH1B2/PAFAH1B2 homodimer) hydrolyzes PAF and 1-O-alkyl-2-acetyl-sn-glycero-3-phosphorylethanolamine (AAGPE) more efficiently than 1-O-alkyl-2-acetyl-sn-glycero-3-phosphoric acid (AAGPA) (PubMed:10542206). In contrast, the alpha1/alpha2 heterodimer(PAFAH1B3/PAFAH1B3 heterodimer) hydrolyzes AAGPA more efficiently than PAF, but has little hydrolytic activity towards AAGPE (PubMed:10542206). May play a role in male germ cell meiosis during the late pachytenestage and meiotic divisions as well as early spermiogenesis (By similarity).</text>
</comment>
<comment type="catalytic activity">
    <reaction evidence="7">
        <text>a 1-O-alkyl-2-acetyl-sn-glycero-3-phosphocholine + H2O = a 1-O-alkyl-sn-glycero-3-phosphocholine + acetate + H(+)</text>
        <dbReference type="Rhea" id="RHEA:17777"/>
        <dbReference type="ChEBI" id="CHEBI:15377"/>
        <dbReference type="ChEBI" id="CHEBI:15378"/>
        <dbReference type="ChEBI" id="CHEBI:30089"/>
        <dbReference type="ChEBI" id="CHEBI:30909"/>
        <dbReference type="ChEBI" id="CHEBI:36707"/>
        <dbReference type="EC" id="3.1.1.47"/>
    </reaction>
    <physiologicalReaction direction="left-to-right" evidence="10">
        <dbReference type="Rhea" id="RHEA:17778"/>
    </physiologicalReaction>
</comment>
<comment type="catalytic activity">
    <reaction evidence="7">
        <text>1-O-hexadecyl-2-acetyl-sn-glycero-3-phosphocholine + H2O = 1-O-hexadecyl-sn-glycero-3-phosphocholine + acetate + H(+)</text>
        <dbReference type="Rhea" id="RHEA:40479"/>
        <dbReference type="ChEBI" id="CHEBI:15377"/>
        <dbReference type="ChEBI" id="CHEBI:15378"/>
        <dbReference type="ChEBI" id="CHEBI:30089"/>
        <dbReference type="ChEBI" id="CHEBI:44811"/>
        <dbReference type="ChEBI" id="CHEBI:64496"/>
    </reaction>
    <physiologicalReaction direction="left-to-right" evidence="10">
        <dbReference type="Rhea" id="RHEA:40480"/>
    </physiologicalReaction>
</comment>
<comment type="catalytic activity">
    <reaction evidence="7">
        <text>1-O-hexadecyl-2-acetyl-sn-glycero-3-phosphate + H2O = 1-O-hexadecyl-sn-glycero-3-phosphate + acetate + H(+)</text>
        <dbReference type="Rhea" id="RHEA:41704"/>
        <dbReference type="ChEBI" id="CHEBI:15377"/>
        <dbReference type="ChEBI" id="CHEBI:15378"/>
        <dbReference type="ChEBI" id="CHEBI:30089"/>
        <dbReference type="ChEBI" id="CHEBI:77580"/>
        <dbReference type="ChEBI" id="CHEBI:78385"/>
    </reaction>
    <physiologicalReaction direction="left-to-right" evidence="10">
        <dbReference type="Rhea" id="RHEA:41705"/>
    </physiologicalReaction>
</comment>
<comment type="catalytic activity">
    <reaction evidence="7">
        <text>1-O-hexadecyl-2-acetyl-sn-glycero-3-phosphoethanolamine + H2O = 1-O-hexadecyl-sn-glycero-3-phosphoethanolamine + acetate + H(+)</text>
        <dbReference type="Rhea" id="RHEA:41708"/>
        <dbReference type="ChEBI" id="CHEBI:15377"/>
        <dbReference type="ChEBI" id="CHEBI:15378"/>
        <dbReference type="ChEBI" id="CHEBI:30089"/>
        <dbReference type="ChEBI" id="CHEBI:78387"/>
        <dbReference type="ChEBI" id="CHEBI:78390"/>
    </reaction>
    <physiologicalReaction direction="left-to-right" evidence="10">
        <dbReference type="Rhea" id="RHEA:41709"/>
    </physiologicalReaction>
</comment>
<comment type="activity regulation">
    <text evidence="7">Beta subunit (PAFAH1B1) stimulates the acetylhydrolase activity of the alpha2/alpha2 catalytic homodimer.</text>
</comment>
<comment type="subunit">
    <text evidence="3 6 7">Forms a catalytic dimer which is either homodimer (alpha2/alpha2 homodimer) or heterodimer with PAFAH1B3 (alpha2/alpha1 heterodimer) (PubMed:10542206). Component of the cytosolic (PAF-AH (I)) heterotetrameric enzyme, which is composed of PAFAH1B1 (beta), PAFAH1B2 (alpha2) and PAFAH1B3 (alpha1) subunits (PubMed:10542206). The catalytic activity of the enzyme resides in the alpha1 (PAFAH1B3) and alpha2 (PAFAH1B2) subunits, whereas the beta subunit (PAFAH1B1) has regulatory activity (PubMed:10542206). Trimer formation is not essential for the catalytic activity (PubMed:10542206). Interacts (homodimer form) with PAFAH1B1 (homodimer form); PAFAH1B2 competes with NDEL1 for PAFAH1B1 binding (By similarity). Interacts with VLDLR; this interaction may modulate the Reelin pathway (By similarity).</text>
</comment>
<comment type="subcellular location">
    <subcellularLocation>
        <location>Cytoplasm</location>
    </subcellularLocation>
</comment>
<comment type="miscellaneous">
    <text evidence="2 4 5 8">Originally the subunits of the type I platelet-activating factor (PAF) acetylhydrolase was named alpha (PAFAH1B1), beta (PAFAH1B2) and gamma (PAFAH1B3) (By similarity) (PubMed:8537406). Now these subunits have been renamed beta (PAFAH1B1), alpha2 (PAFAH1B2) and alpha1 (PAFAH1B3) respectively (By similarity).</text>
</comment>
<comment type="similarity">
    <text evidence="9">Belongs to the 'GDSL' lipolytic enzyme family. Platelet-activating factor acetylhydrolase IB beta/gamma subunits subfamily.</text>
</comment>
<keyword id="KW-0002">3D-structure</keyword>
<keyword id="KW-0007">Acetylation</keyword>
<keyword id="KW-0963">Cytoplasm</keyword>
<keyword id="KW-0903">Direct protein sequencing</keyword>
<keyword id="KW-0378">Hydrolase</keyword>
<keyword id="KW-0442">Lipid degradation</keyword>
<keyword id="KW-0443">Lipid metabolism</keyword>
<keyword id="KW-0597">Phosphoprotein</keyword>
<keyword id="KW-1185">Reference proteome</keyword>